<organism>
    <name type="scientific">Escherichia coli O7:K1 (strain IAI39 / ExPEC)</name>
    <dbReference type="NCBI Taxonomy" id="585057"/>
    <lineage>
        <taxon>Bacteria</taxon>
        <taxon>Pseudomonadati</taxon>
        <taxon>Pseudomonadota</taxon>
        <taxon>Gammaproteobacteria</taxon>
        <taxon>Enterobacterales</taxon>
        <taxon>Enterobacteriaceae</taxon>
        <taxon>Escherichia</taxon>
    </lineage>
</organism>
<evidence type="ECO:0000255" key="1">
    <source>
        <dbReference type="HAMAP-Rule" id="MF_01247"/>
    </source>
</evidence>
<accession>B7NMI3</accession>
<sequence>MLIPSKLSRPVRLDHTVVRERLLAKLSGANNFRLALITSPAGYGKTTLISQWAAGKNDIGWYSLDEGDNQQERFASYLIAAVQQATNGHCAICETMAQKRQYASLTSLFAQLFIELAEWHSPLYLVIDDYHLITNPVIHESMRFFIRHQPENLTLVVLSRNLPQLGIANLRVRDQLLEIGSQQLAFTHQEAKQFFDCRLSSPIEAAESSRICDDVSGWATALQLIALSARQNTHSAHKSARRLAGINASHLSDYLVDEVLDNVDLATRHFLLKSAILRSMNDALINRVTGEENGQMRLEEIERQGLFLQRMDDTGEWFCYHPLFGNFLRQRCQWELAAELPEIHRAAAESWMAQGFPSEAIHHALAAGDALMLRDILLNHAWSLFNHSELSLLEESLKALPWDSLLENPQLVLLQAWLMQSQHRYGEVNTLLARAEHEIKDIREGTMHAEFNALRAQVAINDGNPDEAERLAKLALEELPPGWFYSRIVATSVLGEVLHCKGELTRSLALMQQTEQMARQHDVWHYALWSLIQQSEILFAQGFLQTAWETQEKAFQLINEQHLEQLPMHEFLVRIRAQLLWAWARLDEAEASARSGIEVLSSYQPQQQLQCLAMLIQCSLARGDLDNARSQLNRLENLLGNGKYHSDWISNANKVRVIYWQMTGDKAAAANWLRHTAKPEFANNHFLQGQWRNIARAQILLGEFEPAEIVLEELNENARSLRLMSDLNRNLLLLNQLYWQAGRKSDAQRVLLDALKLANRTGFISHFVIEGEAMAQQLRQLIQLNTLPELEQHRAQRILREINQHHRHKFAHFDENFVERLLNHPEVPELIRTSPLTQREWQVLGLIYSGYSNEQIAGELEVAATTIKTHIRNLYQKLGVAHRQAAVQHAQKLLKMMGYGV</sequence>
<reference key="1">
    <citation type="journal article" date="2009" name="PLoS Genet.">
        <title>Organised genome dynamics in the Escherichia coli species results in highly diverse adaptive paths.</title>
        <authorList>
            <person name="Touchon M."/>
            <person name="Hoede C."/>
            <person name="Tenaillon O."/>
            <person name="Barbe V."/>
            <person name="Baeriswyl S."/>
            <person name="Bidet P."/>
            <person name="Bingen E."/>
            <person name="Bonacorsi S."/>
            <person name="Bouchier C."/>
            <person name="Bouvet O."/>
            <person name="Calteau A."/>
            <person name="Chiapello H."/>
            <person name="Clermont O."/>
            <person name="Cruveiller S."/>
            <person name="Danchin A."/>
            <person name="Diard M."/>
            <person name="Dossat C."/>
            <person name="Karoui M.E."/>
            <person name="Frapy E."/>
            <person name="Garry L."/>
            <person name="Ghigo J.M."/>
            <person name="Gilles A.M."/>
            <person name="Johnson J."/>
            <person name="Le Bouguenec C."/>
            <person name="Lescat M."/>
            <person name="Mangenot S."/>
            <person name="Martinez-Jehanne V."/>
            <person name="Matic I."/>
            <person name="Nassif X."/>
            <person name="Oztas S."/>
            <person name="Petit M.A."/>
            <person name="Pichon C."/>
            <person name="Rouy Z."/>
            <person name="Ruf C.S."/>
            <person name="Schneider D."/>
            <person name="Tourret J."/>
            <person name="Vacherie B."/>
            <person name="Vallenet D."/>
            <person name="Medigue C."/>
            <person name="Rocha E.P.C."/>
            <person name="Denamur E."/>
        </authorList>
    </citation>
    <scope>NUCLEOTIDE SEQUENCE [LARGE SCALE GENOMIC DNA]</scope>
    <source>
        <strain>IAI39 / ExPEC</strain>
    </source>
</reference>
<comment type="function">
    <text evidence="1">Positively regulates the transcription of the maltose regulon whose gene products are responsible for uptake and catabolism of malto-oligosaccharides. Specifically binds to the promoter region of its target genes, recognizing a short DNA motif called the MalT box.</text>
</comment>
<comment type="activity regulation">
    <text evidence="1">Activated by ATP and maltotriose, which are both required for DNA binding.</text>
</comment>
<comment type="subunit">
    <text evidence="1">Monomer in solution. Oligomerizes to an active state in the presence of the positive effectors ATP and maltotriose.</text>
</comment>
<comment type="similarity">
    <text evidence="1">Belongs to the MalT family.</text>
</comment>
<dbReference type="EMBL" id="CU928164">
    <property type="protein sequence ID" value="CAR20011.1"/>
    <property type="molecule type" value="Genomic_DNA"/>
</dbReference>
<dbReference type="RefSeq" id="WP_000906949.1">
    <property type="nucleotide sequence ID" value="NC_011750.1"/>
</dbReference>
<dbReference type="RefSeq" id="YP_002409792.1">
    <property type="nucleotide sequence ID" value="NC_011750.1"/>
</dbReference>
<dbReference type="SMR" id="B7NMI3"/>
<dbReference type="STRING" id="585057.ECIAI39_3899"/>
<dbReference type="KEGG" id="ect:ECIAI39_3899"/>
<dbReference type="PATRIC" id="fig|585057.6.peg.4037"/>
<dbReference type="HOGENOM" id="CLU_006325_3_0_6"/>
<dbReference type="Proteomes" id="UP000000749">
    <property type="component" value="Chromosome"/>
</dbReference>
<dbReference type="GO" id="GO:0005524">
    <property type="term" value="F:ATP binding"/>
    <property type="evidence" value="ECO:0007669"/>
    <property type="project" value="UniProtKB-UniRule"/>
</dbReference>
<dbReference type="GO" id="GO:0003677">
    <property type="term" value="F:DNA binding"/>
    <property type="evidence" value="ECO:0007669"/>
    <property type="project" value="UniProtKB-KW"/>
</dbReference>
<dbReference type="GO" id="GO:0003700">
    <property type="term" value="F:DNA-binding transcription factor activity"/>
    <property type="evidence" value="ECO:0007669"/>
    <property type="project" value="UniProtKB-UniRule"/>
</dbReference>
<dbReference type="GO" id="GO:0045913">
    <property type="term" value="P:positive regulation of carbohydrate metabolic process"/>
    <property type="evidence" value="ECO:0007669"/>
    <property type="project" value="UniProtKB-UniRule"/>
</dbReference>
<dbReference type="GO" id="GO:0045893">
    <property type="term" value="P:positive regulation of DNA-templated transcription"/>
    <property type="evidence" value="ECO:0007669"/>
    <property type="project" value="UniProtKB-UniRule"/>
</dbReference>
<dbReference type="CDD" id="cd06170">
    <property type="entry name" value="LuxR_C_like"/>
    <property type="match status" value="1"/>
</dbReference>
<dbReference type="FunFam" id="1.10.10.10:FF:000115">
    <property type="entry name" value="HTH-type transcriptional regulator MalT"/>
    <property type="match status" value="1"/>
</dbReference>
<dbReference type="FunFam" id="1.25.40.10:FF:000086">
    <property type="entry name" value="HTH-type transcriptional regulator MalT"/>
    <property type="match status" value="1"/>
</dbReference>
<dbReference type="Gene3D" id="3.40.50.300">
    <property type="entry name" value="P-loop containing nucleotide triphosphate hydrolases"/>
    <property type="match status" value="1"/>
</dbReference>
<dbReference type="Gene3D" id="1.25.40.10">
    <property type="entry name" value="Tetratricopeptide repeat domain"/>
    <property type="match status" value="1"/>
</dbReference>
<dbReference type="Gene3D" id="1.10.10.10">
    <property type="entry name" value="Winged helix-like DNA-binding domain superfamily/Winged helix DNA-binding domain"/>
    <property type="match status" value="1"/>
</dbReference>
<dbReference type="HAMAP" id="MF_01247">
    <property type="entry name" value="HTH_type_MalT"/>
    <property type="match status" value="1"/>
</dbReference>
<dbReference type="InterPro" id="IPR027417">
    <property type="entry name" value="P-loop_NTPase"/>
</dbReference>
<dbReference type="InterPro" id="IPR016032">
    <property type="entry name" value="Sig_transdc_resp-reg_C-effctor"/>
</dbReference>
<dbReference type="InterPro" id="IPR011990">
    <property type="entry name" value="TPR-like_helical_dom_sf"/>
</dbReference>
<dbReference type="InterPro" id="IPR041617">
    <property type="entry name" value="TPR_MalT"/>
</dbReference>
<dbReference type="InterPro" id="IPR023768">
    <property type="entry name" value="Tscrpt_reg_HTH_MalT"/>
</dbReference>
<dbReference type="InterPro" id="IPR000792">
    <property type="entry name" value="Tscrpt_reg_LuxR_C"/>
</dbReference>
<dbReference type="InterPro" id="IPR036388">
    <property type="entry name" value="WH-like_DNA-bd_sf"/>
</dbReference>
<dbReference type="NCBIfam" id="NF003420">
    <property type="entry name" value="PRK04841.1"/>
    <property type="match status" value="1"/>
</dbReference>
<dbReference type="PANTHER" id="PTHR44688">
    <property type="entry name" value="DNA-BINDING TRANSCRIPTIONAL ACTIVATOR DEVR_DOSR"/>
    <property type="match status" value="1"/>
</dbReference>
<dbReference type="PANTHER" id="PTHR44688:SF16">
    <property type="entry name" value="DNA-BINDING TRANSCRIPTIONAL ACTIVATOR DEVR_DOSR"/>
    <property type="match status" value="1"/>
</dbReference>
<dbReference type="Pfam" id="PF00196">
    <property type="entry name" value="GerE"/>
    <property type="match status" value="1"/>
</dbReference>
<dbReference type="Pfam" id="PF17874">
    <property type="entry name" value="TPR_MalT"/>
    <property type="match status" value="1"/>
</dbReference>
<dbReference type="PRINTS" id="PR00038">
    <property type="entry name" value="HTHLUXR"/>
</dbReference>
<dbReference type="SMART" id="SM00421">
    <property type="entry name" value="HTH_LUXR"/>
    <property type="match status" value="1"/>
</dbReference>
<dbReference type="SUPFAM" id="SSF46894">
    <property type="entry name" value="C-terminal effector domain of the bipartite response regulators"/>
    <property type="match status" value="1"/>
</dbReference>
<dbReference type="SUPFAM" id="SSF52540">
    <property type="entry name" value="P-loop containing nucleoside triphosphate hydrolases"/>
    <property type="match status" value="1"/>
</dbReference>
<dbReference type="SUPFAM" id="SSF48452">
    <property type="entry name" value="TPR-like"/>
    <property type="match status" value="1"/>
</dbReference>
<dbReference type="PROSITE" id="PS00622">
    <property type="entry name" value="HTH_LUXR_1"/>
    <property type="match status" value="1"/>
</dbReference>
<dbReference type="PROSITE" id="PS50043">
    <property type="entry name" value="HTH_LUXR_2"/>
    <property type="match status" value="1"/>
</dbReference>
<proteinExistence type="inferred from homology"/>
<feature type="chain" id="PRO_1000139845" description="HTH-type transcriptional regulator MalT">
    <location>
        <begin position="1"/>
        <end position="901"/>
    </location>
</feature>
<feature type="domain" description="HTH luxR-type" evidence="1">
    <location>
        <begin position="829"/>
        <end position="894"/>
    </location>
</feature>
<feature type="DNA-binding region" description="H-T-H motif" evidence="1">
    <location>
        <begin position="853"/>
        <end position="872"/>
    </location>
</feature>
<feature type="binding site" evidence="1">
    <location>
        <begin position="39"/>
        <end position="46"/>
    </location>
    <ligand>
        <name>ATP</name>
        <dbReference type="ChEBI" id="CHEBI:30616"/>
    </ligand>
</feature>
<name>MALT_ECO7I</name>
<protein>
    <recommendedName>
        <fullName evidence="1">HTH-type transcriptional regulator MalT</fullName>
    </recommendedName>
    <alternativeName>
        <fullName evidence="1">ATP-dependent transcriptional activator MalT</fullName>
    </alternativeName>
</protein>
<keyword id="KW-0010">Activator</keyword>
<keyword id="KW-0067">ATP-binding</keyword>
<keyword id="KW-0119">Carbohydrate metabolism</keyword>
<keyword id="KW-0238">DNA-binding</keyword>
<keyword id="KW-0547">Nucleotide-binding</keyword>
<keyword id="KW-0804">Transcription</keyword>
<keyword id="KW-0805">Transcription regulation</keyword>
<gene>
    <name evidence="1" type="primary">malT</name>
    <name type="ordered locus">ECIAI39_3899</name>
</gene>